<feature type="chain" id="PRO_0000304834" description="UPF0473 protein LSEI_0788">
    <location>
        <begin position="1"/>
        <end position="106"/>
    </location>
</feature>
<keyword id="KW-1185">Reference proteome</keyword>
<comment type="similarity">
    <text evidence="1">Belongs to the UPF0473 family.</text>
</comment>
<name>Y788_LACP3</name>
<evidence type="ECO:0000255" key="1">
    <source>
        <dbReference type="HAMAP-Rule" id="MF_01448"/>
    </source>
</evidence>
<dbReference type="EMBL" id="CP000423">
    <property type="protein sequence ID" value="ABJ69624.1"/>
    <property type="molecule type" value="Genomic_DNA"/>
</dbReference>
<dbReference type="RefSeq" id="WP_011674279.1">
    <property type="nucleotide sequence ID" value="NC_008526.1"/>
</dbReference>
<dbReference type="RefSeq" id="YP_806066.1">
    <property type="nucleotide sequence ID" value="NC_008526.1"/>
</dbReference>
<dbReference type="STRING" id="321967.LSEI_0788"/>
<dbReference type="PaxDb" id="321967-LSEI_0788"/>
<dbReference type="KEGG" id="lca:LSEI_0788"/>
<dbReference type="PATRIC" id="fig|321967.11.peg.790"/>
<dbReference type="HOGENOM" id="CLU_146610_2_1_9"/>
<dbReference type="Proteomes" id="UP000001651">
    <property type="component" value="Chromosome"/>
</dbReference>
<dbReference type="HAMAP" id="MF_01448">
    <property type="entry name" value="UPF0473"/>
    <property type="match status" value="1"/>
</dbReference>
<dbReference type="InterPro" id="IPR009711">
    <property type="entry name" value="UPF0473"/>
</dbReference>
<dbReference type="NCBIfam" id="NF010215">
    <property type="entry name" value="PRK13678.1-2"/>
    <property type="match status" value="1"/>
</dbReference>
<dbReference type="NCBIfam" id="NF010217">
    <property type="entry name" value="PRK13678.1-4"/>
    <property type="match status" value="1"/>
</dbReference>
<dbReference type="PANTHER" id="PTHR40066">
    <property type="entry name" value="UPF0473 PROTEIN CBO2561/CLC_2432"/>
    <property type="match status" value="1"/>
</dbReference>
<dbReference type="PANTHER" id="PTHR40066:SF1">
    <property type="entry name" value="UPF0473 PROTEIN CBO2561_CLC_2432"/>
    <property type="match status" value="1"/>
</dbReference>
<dbReference type="Pfam" id="PF06949">
    <property type="entry name" value="DUF1292"/>
    <property type="match status" value="1"/>
</dbReference>
<sequence>MANNEHVTPGEDDQQITLIDEKGNEELYQVLFTFDSEDYGKSYVLLYPASESDDQEVEIQAFSFTPDENGDASSGDLFPIDDDAEWDMVEEVLNTFLADDDSNLKD</sequence>
<proteinExistence type="inferred from homology"/>
<gene>
    <name type="ordered locus">LSEI_0788</name>
</gene>
<reference key="1">
    <citation type="journal article" date="2006" name="Proc. Natl. Acad. Sci. U.S.A.">
        <title>Comparative genomics of the lactic acid bacteria.</title>
        <authorList>
            <person name="Makarova K.S."/>
            <person name="Slesarev A."/>
            <person name="Wolf Y.I."/>
            <person name="Sorokin A."/>
            <person name="Mirkin B."/>
            <person name="Koonin E.V."/>
            <person name="Pavlov A."/>
            <person name="Pavlova N."/>
            <person name="Karamychev V."/>
            <person name="Polouchine N."/>
            <person name="Shakhova V."/>
            <person name="Grigoriev I."/>
            <person name="Lou Y."/>
            <person name="Rohksar D."/>
            <person name="Lucas S."/>
            <person name="Huang K."/>
            <person name="Goodstein D.M."/>
            <person name="Hawkins T."/>
            <person name="Plengvidhya V."/>
            <person name="Welker D."/>
            <person name="Hughes J."/>
            <person name="Goh Y."/>
            <person name="Benson A."/>
            <person name="Baldwin K."/>
            <person name="Lee J.-H."/>
            <person name="Diaz-Muniz I."/>
            <person name="Dosti B."/>
            <person name="Smeianov V."/>
            <person name="Wechter W."/>
            <person name="Barabote R."/>
            <person name="Lorca G."/>
            <person name="Altermann E."/>
            <person name="Barrangou R."/>
            <person name="Ganesan B."/>
            <person name="Xie Y."/>
            <person name="Rawsthorne H."/>
            <person name="Tamir D."/>
            <person name="Parker C."/>
            <person name="Breidt F."/>
            <person name="Broadbent J.R."/>
            <person name="Hutkins R."/>
            <person name="O'Sullivan D."/>
            <person name="Steele J."/>
            <person name="Unlu G."/>
            <person name="Saier M.H. Jr."/>
            <person name="Klaenhammer T."/>
            <person name="Richardson P."/>
            <person name="Kozyavkin S."/>
            <person name="Weimer B.C."/>
            <person name="Mills D.A."/>
        </authorList>
    </citation>
    <scope>NUCLEOTIDE SEQUENCE [LARGE SCALE GENOMIC DNA]</scope>
    <source>
        <strain>ATCC 334 / BCRC 17002 / CCUG 31169 / CIP 107868 / KCTC 3260 / NRRL B-441</strain>
    </source>
</reference>
<organism>
    <name type="scientific">Lacticaseibacillus paracasei (strain ATCC 334 / BCRC 17002 / CCUG 31169 / CIP 107868 / KCTC 3260 / NRRL B-441)</name>
    <name type="common">Lactobacillus paracasei</name>
    <dbReference type="NCBI Taxonomy" id="321967"/>
    <lineage>
        <taxon>Bacteria</taxon>
        <taxon>Bacillati</taxon>
        <taxon>Bacillota</taxon>
        <taxon>Bacilli</taxon>
        <taxon>Lactobacillales</taxon>
        <taxon>Lactobacillaceae</taxon>
        <taxon>Lacticaseibacillus</taxon>
    </lineage>
</organism>
<accession>Q03AZ8</accession>
<protein>
    <recommendedName>
        <fullName evidence="1">UPF0473 protein LSEI_0788</fullName>
    </recommendedName>
</protein>